<protein>
    <recommendedName>
        <fullName evidence="1">Phenylalanine--tRNA ligase alpha subunit</fullName>
        <ecNumber evidence="1">6.1.1.20</ecNumber>
    </recommendedName>
    <alternativeName>
        <fullName evidence="1">Phenylalanyl-tRNA synthetase alpha subunit</fullName>
        <shortName evidence="1">PheRS</shortName>
    </alternativeName>
</protein>
<comment type="catalytic activity">
    <reaction evidence="1">
        <text>tRNA(Phe) + L-phenylalanine + ATP = L-phenylalanyl-tRNA(Phe) + AMP + diphosphate + H(+)</text>
        <dbReference type="Rhea" id="RHEA:19413"/>
        <dbReference type="Rhea" id="RHEA-COMP:9668"/>
        <dbReference type="Rhea" id="RHEA-COMP:9699"/>
        <dbReference type="ChEBI" id="CHEBI:15378"/>
        <dbReference type="ChEBI" id="CHEBI:30616"/>
        <dbReference type="ChEBI" id="CHEBI:33019"/>
        <dbReference type="ChEBI" id="CHEBI:58095"/>
        <dbReference type="ChEBI" id="CHEBI:78442"/>
        <dbReference type="ChEBI" id="CHEBI:78531"/>
        <dbReference type="ChEBI" id="CHEBI:456215"/>
        <dbReference type="EC" id="6.1.1.20"/>
    </reaction>
</comment>
<comment type="cofactor">
    <cofactor evidence="1">
        <name>Mg(2+)</name>
        <dbReference type="ChEBI" id="CHEBI:18420"/>
    </cofactor>
    <text evidence="1">Binds 2 magnesium ions per tetramer.</text>
</comment>
<comment type="subunit">
    <text evidence="1">Tetramer of two alpha and two beta subunits.</text>
</comment>
<comment type="subcellular location">
    <subcellularLocation>
        <location evidence="1">Cytoplasm</location>
    </subcellularLocation>
</comment>
<comment type="similarity">
    <text evidence="1">Belongs to the class-II aminoacyl-tRNA synthetase family. Phe-tRNA synthetase alpha subunit type 1 subfamily.</text>
</comment>
<accession>C0R5D1</accession>
<dbReference type="EC" id="6.1.1.20" evidence="1"/>
<dbReference type="EMBL" id="CP001391">
    <property type="protein sequence ID" value="ACN94973.1"/>
    <property type="molecule type" value="Genomic_DNA"/>
</dbReference>
<dbReference type="RefSeq" id="WP_012673065.1">
    <property type="nucleotide sequence ID" value="NZ_MKIF01000100.1"/>
</dbReference>
<dbReference type="SMR" id="C0R5D1"/>
<dbReference type="STRING" id="66084.WRi_001200"/>
<dbReference type="KEGG" id="wri:WRi_001200"/>
<dbReference type="HOGENOM" id="CLU_025086_0_1_5"/>
<dbReference type="Proteomes" id="UP000001293">
    <property type="component" value="Chromosome"/>
</dbReference>
<dbReference type="GO" id="GO:0005737">
    <property type="term" value="C:cytoplasm"/>
    <property type="evidence" value="ECO:0007669"/>
    <property type="project" value="UniProtKB-SubCell"/>
</dbReference>
<dbReference type="GO" id="GO:0005524">
    <property type="term" value="F:ATP binding"/>
    <property type="evidence" value="ECO:0007669"/>
    <property type="project" value="UniProtKB-UniRule"/>
</dbReference>
<dbReference type="GO" id="GO:0000287">
    <property type="term" value="F:magnesium ion binding"/>
    <property type="evidence" value="ECO:0007669"/>
    <property type="project" value="UniProtKB-UniRule"/>
</dbReference>
<dbReference type="GO" id="GO:0004826">
    <property type="term" value="F:phenylalanine-tRNA ligase activity"/>
    <property type="evidence" value="ECO:0007669"/>
    <property type="project" value="UniProtKB-UniRule"/>
</dbReference>
<dbReference type="GO" id="GO:0000049">
    <property type="term" value="F:tRNA binding"/>
    <property type="evidence" value="ECO:0007669"/>
    <property type="project" value="InterPro"/>
</dbReference>
<dbReference type="GO" id="GO:0006432">
    <property type="term" value="P:phenylalanyl-tRNA aminoacylation"/>
    <property type="evidence" value="ECO:0007669"/>
    <property type="project" value="UniProtKB-UniRule"/>
</dbReference>
<dbReference type="CDD" id="cd00496">
    <property type="entry name" value="PheRS_alpha_core"/>
    <property type="match status" value="1"/>
</dbReference>
<dbReference type="Gene3D" id="3.30.930.10">
    <property type="entry name" value="Bira Bifunctional Protein, Domain 2"/>
    <property type="match status" value="1"/>
</dbReference>
<dbReference type="HAMAP" id="MF_00281">
    <property type="entry name" value="Phe_tRNA_synth_alpha1"/>
    <property type="match status" value="1"/>
</dbReference>
<dbReference type="InterPro" id="IPR006195">
    <property type="entry name" value="aa-tRNA-synth_II"/>
</dbReference>
<dbReference type="InterPro" id="IPR045864">
    <property type="entry name" value="aa-tRNA-synth_II/BPL/LPL"/>
</dbReference>
<dbReference type="InterPro" id="IPR004529">
    <property type="entry name" value="Phe-tRNA-synth_IIc_asu"/>
</dbReference>
<dbReference type="InterPro" id="IPR004188">
    <property type="entry name" value="Phe-tRNA_ligase_II_N"/>
</dbReference>
<dbReference type="InterPro" id="IPR022911">
    <property type="entry name" value="Phe_tRNA_ligase_alpha1_bac"/>
</dbReference>
<dbReference type="InterPro" id="IPR002319">
    <property type="entry name" value="Phenylalanyl-tRNA_Synthase"/>
</dbReference>
<dbReference type="InterPro" id="IPR010978">
    <property type="entry name" value="tRNA-bd_arm"/>
</dbReference>
<dbReference type="NCBIfam" id="TIGR00468">
    <property type="entry name" value="pheS"/>
    <property type="match status" value="1"/>
</dbReference>
<dbReference type="PANTHER" id="PTHR11538:SF41">
    <property type="entry name" value="PHENYLALANINE--TRNA LIGASE, MITOCHONDRIAL"/>
    <property type="match status" value="1"/>
</dbReference>
<dbReference type="PANTHER" id="PTHR11538">
    <property type="entry name" value="PHENYLALANYL-TRNA SYNTHETASE"/>
    <property type="match status" value="1"/>
</dbReference>
<dbReference type="Pfam" id="PF02912">
    <property type="entry name" value="Phe_tRNA-synt_N"/>
    <property type="match status" value="1"/>
</dbReference>
<dbReference type="Pfam" id="PF01409">
    <property type="entry name" value="tRNA-synt_2d"/>
    <property type="match status" value="1"/>
</dbReference>
<dbReference type="SUPFAM" id="SSF55681">
    <property type="entry name" value="Class II aaRS and biotin synthetases"/>
    <property type="match status" value="1"/>
</dbReference>
<dbReference type="SUPFAM" id="SSF46589">
    <property type="entry name" value="tRNA-binding arm"/>
    <property type="match status" value="1"/>
</dbReference>
<dbReference type="PROSITE" id="PS50862">
    <property type="entry name" value="AA_TRNA_LIGASE_II"/>
    <property type="match status" value="1"/>
</dbReference>
<reference key="1">
    <citation type="journal article" date="2009" name="Proc. Natl. Acad. Sci. U.S.A.">
        <title>The mosaic genome structure of the Wolbachia wRi strain infecting Drosophila simulans.</title>
        <authorList>
            <person name="Klasson L."/>
            <person name="Westberg J."/>
            <person name="Sapountzis P."/>
            <person name="Naeslund K."/>
            <person name="Lutnaes Y."/>
            <person name="Darby A.C."/>
            <person name="Veneti Z."/>
            <person name="Chen L."/>
            <person name="Braig H.R."/>
            <person name="Garrett R."/>
            <person name="Bourtzis K."/>
            <person name="Andersson S.G."/>
        </authorList>
    </citation>
    <scope>NUCLEOTIDE SEQUENCE [LARGE SCALE GENOMIC DNA]</scope>
    <source>
        <strain>wRi</strain>
    </source>
</reference>
<proteinExistence type="inferred from homology"/>
<name>SYFA_WOLWR</name>
<evidence type="ECO:0000255" key="1">
    <source>
        <dbReference type="HAMAP-Rule" id="MF_00281"/>
    </source>
</evidence>
<gene>
    <name evidence="1" type="primary">pheS</name>
    <name type="ordered locus">WRi_001200</name>
</gene>
<organism>
    <name type="scientific">Wolbachia sp. subsp. Drosophila simulans (strain wRi)</name>
    <dbReference type="NCBI Taxonomy" id="66084"/>
    <lineage>
        <taxon>Bacteria</taxon>
        <taxon>Pseudomonadati</taxon>
        <taxon>Pseudomonadota</taxon>
        <taxon>Alphaproteobacteria</taxon>
        <taxon>Rickettsiales</taxon>
        <taxon>Anaplasmataceae</taxon>
        <taxon>Wolbachieae</taxon>
        <taxon>Wolbachia</taxon>
    </lineage>
</organism>
<sequence>MNKELLDDILSLEDKAVSEIENASSLQDLEKVRLSYLGKKGVIKAYFDNLKEIEDAGKKRNLGEVINVLRNKLDQLIMNKENILKAEEVNFKLQNEAVDITLPARPEKIGKVHPLSKVINEVKLIFAHMGFKAVDGPDIEDEFHVFDALNTPSHHPAREEQDTFYLKNKRNDKRMVLRTHTSSVQIRTMEKTKKFPIKIVAPGRVYRNDFDATHTPMFHQIEGLYVDENVNMGQLKFTIHHFLNKFFGDKGLKIRFRNSFFPFTEPSAEVDISYKGSKWIEVLGCGMVHPNVFQNVGIDHTKYNGFAFGIGIERLAMLKYQISDLRSFYDNKISWLDHYGFHFSSLR</sequence>
<keyword id="KW-0030">Aminoacyl-tRNA synthetase</keyword>
<keyword id="KW-0067">ATP-binding</keyword>
<keyword id="KW-0963">Cytoplasm</keyword>
<keyword id="KW-0436">Ligase</keyword>
<keyword id="KW-0460">Magnesium</keyword>
<keyword id="KW-0479">Metal-binding</keyword>
<keyword id="KW-0547">Nucleotide-binding</keyword>
<keyword id="KW-0648">Protein biosynthesis</keyword>
<feature type="chain" id="PRO_1000199334" description="Phenylalanine--tRNA ligase alpha subunit">
    <location>
        <begin position="1"/>
        <end position="347"/>
    </location>
</feature>
<feature type="binding site" evidence="1">
    <location>
        <position position="265"/>
    </location>
    <ligand>
        <name>Mg(2+)</name>
        <dbReference type="ChEBI" id="CHEBI:18420"/>
        <note>shared with beta subunit</note>
    </ligand>
</feature>